<evidence type="ECO:0000255" key="1">
    <source>
        <dbReference type="HAMAP-Rule" id="MF_00484"/>
    </source>
</evidence>
<evidence type="ECO:0000305" key="2"/>
<reference key="1">
    <citation type="journal article" date="2004" name="PLoS Biol.">
        <title>Genomic insights into methanotrophy: the complete genome sequence of Methylococcus capsulatus (Bath).</title>
        <authorList>
            <person name="Ward N.L."/>
            <person name="Larsen O."/>
            <person name="Sakwa J."/>
            <person name="Bruseth L."/>
            <person name="Khouri H.M."/>
            <person name="Durkin A.S."/>
            <person name="Dimitrov G."/>
            <person name="Jiang L."/>
            <person name="Scanlan D."/>
            <person name="Kang K.H."/>
            <person name="Lewis M.R."/>
            <person name="Nelson K.E."/>
            <person name="Methe B.A."/>
            <person name="Wu M."/>
            <person name="Heidelberg J.F."/>
            <person name="Paulsen I.T."/>
            <person name="Fouts D.E."/>
            <person name="Ravel J."/>
            <person name="Tettelin H."/>
            <person name="Ren Q."/>
            <person name="Read T.D."/>
            <person name="DeBoy R.T."/>
            <person name="Seshadri R."/>
            <person name="Salzberg S.L."/>
            <person name="Jensen H.B."/>
            <person name="Birkeland N.K."/>
            <person name="Nelson W.C."/>
            <person name="Dodson R.J."/>
            <person name="Grindhaug S.H."/>
            <person name="Holt I.E."/>
            <person name="Eidhammer I."/>
            <person name="Jonasen I."/>
            <person name="Vanaken S."/>
            <person name="Utterback T.R."/>
            <person name="Feldblyum T.V."/>
            <person name="Fraser C.M."/>
            <person name="Lillehaug J.R."/>
            <person name="Eisen J.A."/>
        </authorList>
    </citation>
    <scope>NUCLEOTIDE SEQUENCE [LARGE SCALE GENOMIC DNA]</scope>
    <source>
        <strain>ATCC 33009 / NCIMB 11132 / Bath</strain>
    </source>
</reference>
<protein>
    <recommendedName>
        <fullName evidence="1">Glycogen synthase 2</fullName>
        <ecNumber evidence="1">2.4.1.21</ecNumber>
    </recommendedName>
    <alternativeName>
        <fullName evidence="1">Starch [bacterial glycogen] synthase 2</fullName>
    </alternativeName>
</protein>
<comment type="function">
    <text evidence="1">Synthesizes alpha-1,4-glucan chains using ADP-glucose.</text>
</comment>
<comment type="catalytic activity">
    <reaction evidence="1">
        <text>[(1-&gt;4)-alpha-D-glucosyl](n) + ADP-alpha-D-glucose = [(1-&gt;4)-alpha-D-glucosyl](n+1) + ADP + H(+)</text>
        <dbReference type="Rhea" id="RHEA:18189"/>
        <dbReference type="Rhea" id="RHEA-COMP:9584"/>
        <dbReference type="Rhea" id="RHEA-COMP:9587"/>
        <dbReference type="ChEBI" id="CHEBI:15378"/>
        <dbReference type="ChEBI" id="CHEBI:15444"/>
        <dbReference type="ChEBI" id="CHEBI:57498"/>
        <dbReference type="ChEBI" id="CHEBI:456216"/>
        <dbReference type="EC" id="2.4.1.21"/>
    </reaction>
</comment>
<comment type="pathway">
    <text evidence="1">Glycan biosynthesis; glycogen biosynthesis.</text>
</comment>
<comment type="similarity">
    <text evidence="1">Belongs to the glycosyltransferase 1 family. Bacterial/plant glycogen synthase subfamily.</text>
</comment>
<comment type="sequence caution" evidence="2">
    <conflict type="erroneous initiation">
        <sequence resource="EMBL-CDS" id="AAU91308"/>
    </conflict>
</comment>
<name>GLGA2_METCA</name>
<proteinExistence type="inferred from homology"/>
<gene>
    <name evidence="1" type="primary">glgA2</name>
    <name type="ordered locus">MCA2606</name>
</gene>
<feature type="chain" id="PRO_0000230246" description="Glycogen synthase 2">
    <location>
        <begin position="1"/>
        <end position="487"/>
    </location>
</feature>
<feature type="binding site" evidence="1">
    <location>
        <position position="12"/>
    </location>
    <ligand>
        <name>ADP-alpha-D-glucose</name>
        <dbReference type="ChEBI" id="CHEBI:57498"/>
    </ligand>
</feature>
<dbReference type="EC" id="2.4.1.21" evidence="1"/>
<dbReference type="EMBL" id="AE017282">
    <property type="protein sequence ID" value="AAU91308.1"/>
    <property type="status" value="ALT_INIT"/>
    <property type="molecule type" value="Genomic_DNA"/>
</dbReference>
<dbReference type="SMR" id="Q604D9"/>
<dbReference type="STRING" id="243233.MCA2606"/>
<dbReference type="CAZy" id="GT5">
    <property type="family name" value="Glycosyltransferase Family 5"/>
</dbReference>
<dbReference type="KEGG" id="mca:MCA2606"/>
<dbReference type="eggNOG" id="COG0297">
    <property type="taxonomic scope" value="Bacteria"/>
</dbReference>
<dbReference type="HOGENOM" id="CLU_009583_18_3_6"/>
<dbReference type="UniPathway" id="UPA00164"/>
<dbReference type="Proteomes" id="UP000006821">
    <property type="component" value="Chromosome"/>
</dbReference>
<dbReference type="GO" id="GO:0009011">
    <property type="term" value="F:alpha-1,4-glucan glucosyltransferase (ADP-glucose donor) activity"/>
    <property type="evidence" value="ECO:0007669"/>
    <property type="project" value="UniProtKB-UniRule"/>
</dbReference>
<dbReference type="GO" id="GO:0004373">
    <property type="term" value="F:alpha-1,4-glucan glucosyltransferase (UDP-glucose donor) activity"/>
    <property type="evidence" value="ECO:0007669"/>
    <property type="project" value="InterPro"/>
</dbReference>
<dbReference type="GO" id="GO:0005978">
    <property type="term" value="P:glycogen biosynthetic process"/>
    <property type="evidence" value="ECO:0007669"/>
    <property type="project" value="UniProtKB-UniRule"/>
</dbReference>
<dbReference type="CDD" id="cd03791">
    <property type="entry name" value="GT5_Glycogen_synthase_DULL1-like"/>
    <property type="match status" value="1"/>
</dbReference>
<dbReference type="FunFam" id="3.40.50.2000:FF:000260">
    <property type="entry name" value="Starch synthase, chloroplastic/amyloplastic"/>
    <property type="match status" value="1"/>
</dbReference>
<dbReference type="Gene3D" id="3.40.50.2000">
    <property type="entry name" value="Glycogen Phosphorylase B"/>
    <property type="match status" value="2"/>
</dbReference>
<dbReference type="HAMAP" id="MF_00484">
    <property type="entry name" value="Glycogen_synth"/>
    <property type="match status" value="1"/>
</dbReference>
<dbReference type="InterPro" id="IPR001296">
    <property type="entry name" value="Glyco_trans_1"/>
</dbReference>
<dbReference type="InterPro" id="IPR011835">
    <property type="entry name" value="GS/SS"/>
</dbReference>
<dbReference type="InterPro" id="IPR013534">
    <property type="entry name" value="Starch_synth_cat_dom"/>
</dbReference>
<dbReference type="NCBIfam" id="TIGR02095">
    <property type="entry name" value="glgA"/>
    <property type="match status" value="1"/>
</dbReference>
<dbReference type="NCBIfam" id="NF001905">
    <property type="entry name" value="PRK00654.2-4"/>
    <property type="match status" value="1"/>
</dbReference>
<dbReference type="PANTHER" id="PTHR46083">
    <property type="match status" value="1"/>
</dbReference>
<dbReference type="PANTHER" id="PTHR46083:SF1">
    <property type="entry name" value="GLYCOGEN SYNTHASE 2-RELATED"/>
    <property type="match status" value="1"/>
</dbReference>
<dbReference type="Pfam" id="PF08323">
    <property type="entry name" value="Glyco_transf_5"/>
    <property type="match status" value="1"/>
</dbReference>
<dbReference type="Pfam" id="PF00534">
    <property type="entry name" value="Glycos_transf_1"/>
    <property type="match status" value="1"/>
</dbReference>
<dbReference type="SUPFAM" id="SSF53756">
    <property type="entry name" value="UDP-Glycosyltransferase/glycogen phosphorylase"/>
    <property type="match status" value="1"/>
</dbReference>
<keyword id="KW-0320">Glycogen biosynthesis</keyword>
<keyword id="KW-0328">Glycosyltransferase</keyword>
<keyword id="KW-1185">Reference proteome</keyword>
<keyword id="KW-0808">Transferase</keyword>
<accession>Q604D9</accession>
<organism>
    <name type="scientific">Methylococcus capsulatus (strain ATCC 33009 / NCIMB 11132 / Bath)</name>
    <dbReference type="NCBI Taxonomy" id="243233"/>
    <lineage>
        <taxon>Bacteria</taxon>
        <taxon>Pseudomonadati</taxon>
        <taxon>Pseudomonadota</taxon>
        <taxon>Gammaproteobacteria</taxon>
        <taxon>Methylococcales</taxon>
        <taxon>Methylococcaceae</taxon>
        <taxon>Methylococcus</taxon>
    </lineage>
</organism>
<sequence length="487" mass="56176">MHVTPELAPVAKVGGLADVVFGLGRELEIRGNHVEIILPKYDCMRYDQIWGLQRTFDDLWVPWYGGAIHCSVYFGFVHGRKCFFIEPHSQDNFFNRGAVYGFHDDIFRFAFFSRAAMEFLWKAGKNPDIIHCHDWQTALVPVYLYEIYQPMGMRHPRVCFTIHNFKHQGVTGAQVLHASGLDRPEYYFHYDRLRDNHNPHAINLMKGGIVYANFVTTVSPRYAMEAKDQGQGFGLEPTLHIHHMKYGGVVNGIDYDVWNPEIDPHIPVHFNVDTIEGKYADKKALRDRLLLADNEKPIVSFVGRLDPQKGIELIRHALFYTLGQGGQFVLLGSSPDGAINGYFWGLKRQFNDNPDCHLEIGYNEELAHLVYAGSDVMVVPSRFEPCGLTQLIAMRYGTIPVVREIGGLADTVIDKDFSHRPLHERNGYVFRDYDERGLESALGRAIACYYQYPDHFRELMKNAMRYDYSWNHPGQDYLNIYHYIRDK</sequence>